<organism>
    <name type="scientific">Paraburkholderia phytofirmans (strain DSM 17436 / LMG 22146 / PsJN)</name>
    <name type="common">Burkholderia phytofirmans</name>
    <dbReference type="NCBI Taxonomy" id="398527"/>
    <lineage>
        <taxon>Bacteria</taxon>
        <taxon>Pseudomonadati</taxon>
        <taxon>Pseudomonadota</taxon>
        <taxon>Betaproteobacteria</taxon>
        <taxon>Burkholderiales</taxon>
        <taxon>Burkholderiaceae</taxon>
        <taxon>Paraburkholderia</taxon>
    </lineage>
</organism>
<evidence type="ECO:0000255" key="1">
    <source>
        <dbReference type="HAMAP-Rule" id="MF_01321"/>
    </source>
</evidence>
<name>RPOB_PARPJ</name>
<protein>
    <recommendedName>
        <fullName evidence="1">DNA-directed RNA polymerase subunit beta</fullName>
        <shortName evidence="1">RNAP subunit beta</shortName>
        <ecNumber evidence="1">2.7.7.6</ecNumber>
    </recommendedName>
    <alternativeName>
        <fullName evidence="1">RNA polymerase subunit beta</fullName>
    </alternativeName>
    <alternativeName>
        <fullName evidence="1">Transcriptase subunit beta</fullName>
    </alternativeName>
</protein>
<keyword id="KW-0240">DNA-directed RNA polymerase</keyword>
<keyword id="KW-0548">Nucleotidyltransferase</keyword>
<keyword id="KW-0804">Transcription</keyword>
<keyword id="KW-0808">Transferase</keyword>
<dbReference type="EC" id="2.7.7.6" evidence="1"/>
<dbReference type="EMBL" id="CP001052">
    <property type="protein sequence ID" value="ACD18042.1"/>
    <property type="molecule type" value="Genomic_DNA"/>
</dbReference>
<dbReference type="RefSeq" id="WP_012434577.1">
    <property type="nucleotide sequence ID" value="NC_010681.1"/>
</dbReference>
<dbReference type="SMR" id="B2T759"/>
<dbReference type="STRING" id="398527.Bphyt_3652"/>
<dbReference type="KEGG" id="bpy:Bphyt_3652"/>
<dbReference type="eggNOG" id="COG0085">
    <property type="taxonomic scope" value="Bacteria"/>
</dbReference>
<dbReference type="HOGENOM" id="CLU_000524_4_0_4"/>
<dbReference type="OrthoDB" id="9803954at2"/>
<dbReference type="Proteomes" id="UP000001739">
    <property type="component" value="Chromosome 1"/>
</dbReference>
<dbReference type="GO" id="GO:0000428">
    <property type="term" value="C:DNA-directed RNA polymerase complex"/>
    <property type="evidence" value="ECO:0007669"/>
    <property type="project" value="UniProtKB-KW"/>
</dbReference>
<dbReference type="GO" id="GO:0003677">
    <property type="term" value="F:DNA binding"/>
    <property type="evidence" value="ECO:0007669"/>
    <property type="project" value="UniProtKB-UniRule"/>
</dbReference>
<dbReference type="GO" id="GO:0003899">
    <property type="term" value="F:DNA-directed RNA polymerase activity"/>
    <property type="evidence" value="ECO:0007669"/>
    <property type="project" value="UniProtKB-UniRule"/>
</dbReference>
<dbReference type="GO" id="GO:0032549">
    <property type="term" value="F:ribonucleoside binding"/>
    <property type="evidence" value="ECO:0007669"/>
    <property type="project" value="InterPro"/>
</dbReference>
<dbReference type="GO" id="GO:0006351">
    <property type="term" value="P:DNA-templated transcription"/>
    <property type="evidence" value="ECO:0007669"/>
    <property type="project" value="UniProtKB-UniRule"/>
</dbReference>
<dbReference type="CDD" id="cd00653">
    <property type="entry name" value="RNA_pol_B_RPB2"/>
    <property type="match status" value="1"/>
</dbReference>
<dbReference type="FunFam" id="2.40.50.100:FF:000006">
    <property type="entry name" value="DNA-directed RNA polymerase subunit beta"/>
    <property type="match status" value="1"/>
</dbReference>
<dbReference type="FunFam" id="2.40.50.150:FF:000001">
    <property type="entry name" value="DNA-directed RNA polymerase subunit beta"/>
    <property type="match status" value="1"/>
</dbReference>
<dbReference type="FunFam" id="3.90.1110.10:FF:000004">
    <property type="entry name" value="DNA-directed RNA polymerase subunit beta"/>
    <property type="match status" value="1"/>
</dbReference>
<dbReference type="FunFam" id="3.90.1800.10:FF:000001">
    <property type="entry name" value="DNA-directed RNA polymerase subunit beta"/>
    <property type="match status" value="1"/>
</dbReference>
<dbReference type="Gene3D" id="2.40.50.100">
    <property type="match status" value="1"/>
</dbReference>
<dbReference type="Gene3D" id="2.40.50.150">
    <property type="match status" value="1"/>
</dbReference>
<dbReference type="Gene3D" id="3.90.1100.10">
    <property type="match status" value="2"/>
</dbReference>
<dbReference type="Gene3D" id="2.30.150.10">
    <property type="entry name" value="DNA-directed RNA polymerase, beta subunit, external 1 domain"/>
    <property type="match status" value="1"/>
</dbReference>
<dbReference type="Gene3D" id="2.40.270.10">
    <property type="entry name" value="DNA-directed RNA polymerase, subunit 2, domain 6"/>
    <property type="match status" value="1"/>
</dbReference>
<dbReference type="Gene3D" id="3.90.1800.10">
    <property type="entry name" value="RNA polymerase alpha subunit dimerisation domain"/>
    <property type="match status" value="1"/>
</dbReference>
<dbReference type="Gene3D" id="3.90.1110.10">
    <property type="entry name" value="RNA polymerase Rpb2, domain 2"/>
    <property type="match status" value="1"/>
</dbReference>
<dbReference type="HAMAP" id="MF_01321">
    <property type="entry name" value="RNApol_bact_RpoB"/>
    <property type="match status" value="1"/>
</dbReference>
<dbReference type="InterPro" id="IPR042107">
    <property type="entry name" value="DNA-dir_RNA_pol_bsu_ext_1_sf"/>
</dbReference>
<dbReference type="InterPro" id="IPR019462">
    <property type="entry name" value="DNA-dir_RNA_pol_bsu_external_1"/>
</dbReference>
<dbReference type="InterPro" id="IPR015712">
    <property type="entry name" value="DNA-dir_RNA_pol_su2"/>
</dbReference>
<dbReference type="InterPro" id="IPR007120">
    <property type="entry name" value="DNA-dir_RNAP_su2_dom"/>
</dbReference>
<dbReference type="InterPro" id="IPR037033">
    <property type="entry name" value="DNA-dir_RNAP_su2_hyb_sf"/>
</dbReference>
<dbReference type="InterPro" id="IPR010243">
    <property type="entry name" value="RNA_pol_bsu_bac"/>
</dbReference>
<dbReference type="InterPro" id="IPR007121">
    <property type="entry name" value="RNA_pol_bsu_CS"/>
</dbReference>
<dbReference type="InterPro" id="IPR007644">
    <property type="entry name" value="RNA_pol_bsu_protrusion"/>
</dbReference>
<dbReference type="InterPro" id="IPR007642">
    <property type="entry name" value="RNA_pol_Rpb2_2"/>
</dbReference>
<dbReference type="InterPro" id="IPR037034">
    <property type="entry name" value="RNA_pol_Rpb2_2_sf"/>
</dbReference>
<dbReference type="InterPro" id="IPR007645">
    <property type="entry name" value="RNA_pol_Rpb2_3"/>
</dbReference>
<dbReference type="InterPro" id="IPR007641">
    <property type="entry name" value="RNA_pol_Rpb2_7"/>
</dbReference>
<dbReference type="InterPro" id="IPR014724">
    <property type="entry name" value="RNA_pol_RPB2_OB-fold"/>
</dbReference>
<dbReference type="NCBIfam" id="NF001616">
    <property type="entry name" value="PRK00405.1"/>
    <property type="match status" value="1"/>
</dbReference>
<dbReference type="NCBIfam" id="TIGR02013">
    <property type="entry name" value="rpoB"/>
    <property type="match status" value="1"/>
</dbReference>
<dbReference type="PANTHER" id="PTHR20856">
    <property type="entry name" value="DNA-DIRECTED RNA POLYMERASE I SUBUNIT 2"/>
    <property type="match status" value="1"/>
</dbReference>
<dbReference type="Pfam" id="PF04563">
    <property type="entry name" value="RNA_pol_Rpb2_1"/>
    <property type="match status" value="1"/>
</dbReference>
<dbReference type="Pfam" id="PF04561">
    <property type="entry name" value="RNA_pol_Rpb2_2"/>
    <property type="match status" value="2"/>
</dbReference>
<dbReference type="Pfam" id="PF04565">
    <property type="entry name" value="RNA_pol_Rpb2_3"/>
    <property type="match status" value="1"/>
</dbReference>
<dbReference type="Pfam" id="PF10385">
    <property type="entry name" value="RNA_pol_Rpb2_45"/>
    <property type="match status" value="1"/>
</dbReference>
<dbReference type="Pfam" id="PF00562">
    <property type="entry name" value="RNA_pol_Rpb2_6"/>
    <property type="match status" value="1"/>
</dbReference>
<dbReference type="Pfam" id="PF04560">
    <property type="entry name" value="RNA_pol_Rpb2_7"/>
    <property type="match status" value="1"/>
</dbReference>
<dbReference type="SUPFAM" id="SSF64484">
    <property type="entry name" value="beta and beta-prime subunits of DNA dependent RNA-polymerase"/>
    <property type="match status" value="1"/>
</dbReference>
<dbReference type="PROSITE" id="PS01166">
    <property type="entry name" value="RNA_POL_BETA"/>
    <property type="match status" value="1"/>
</dbReference>
<proteinExistence type="inferred from homology"/>
<feature type="chain" id="PRO_1000141673" description="DNA-directed RNA polymerase subunit beta">
    <location>
        <begin position="1"/>
        <end position="1368"/>
    </location>
</feature>
<accession>B2T759</accession>
<comment type="function">
    <text evidence="1">DNA-dependent RNA polymerase catalyzes the transcription of DNA into RNA using the four ribonucleoside triphosphates as substrates.</text>
</comment>
<comment type="catalytic activity">
    <reaction evidence="1">
        <text>RNA(n) + a ribonucleoside 5'-triphosphate = RNA(n+1) + diphosphate</text>
        <dbReference type="Rhea" id="RHEA:21248"/>
        <dbReference type="Rhea" id="RHEA-COMP:14527"/>
        <dbReference type="Rhea" id="RHEA-COMP:17342"/>
        <dbReference type="ChEBI" id="CHEBI:33019"/>
        <dbReference type="ChEBI" id="CHEBI:61557"/>
        <dbReference type="ChEBI" id="CHEBI:140395"/>
        <dbReference type="EC" id="2.7.7.6"/>
    </reaction>
</comment>
<comment type="subunit">
    <text evidence="1">The RNAP catalytic core consists of 2 alpha, 1 beta, 1 beta' and 1 omega subunit. When a sigma factor is associated with the core the holoenzyme is formed, which can initiate transcription.</text>
</comment>
<comment type="similarity">
    <text evidence="1">Belongs to the RNA polymerase beta chain family.</text>
</comment>
<sequence length="1368" mass="153057">MQYSFTEKKRIRKSFAKRPIVHQVPFLLATQLESFSTFLQADTSSTQRKPEGLQAAFTSVFPIVSHNGFARLEFVSYMLSPPAFNIKECQQRGLTYCSALRAKVRLVLLDKESPSKPVVKEVKEQEVYMGEIPLMTPTGSFVINGTERVIVSQLHRSPGVFFEHDKGKTHSSGKLLFSARIIPYRGSWLDFEFDPKDVLYFRVDRRRKMPVTILLKAIGLTPEQILANFFVFDNFTLMPEGAQMEFVPERLRGEVARFDITDRDGNVIVQKDKRINAKHIRDLDNAKTKFISVPEDYLLGRVLAKNVVDGDTGEVIANANDEITETVLEKLRESKIKDIQTLYTNDLDQGPYISSTLRIDETADKMAARIAIYRMMRPGEPPTEEAVEALFNRLFYSEDAYDLSKVGRMKFNRRVGRDEIVGPMTLQDDDILATIKILVELRNGKGEVDDIDHLGNRRVRCVGELAENQFRAGLVRVERAVKERLGQAESENLMPHDLINSKPISSAIREFFGSSQLSQFMDQTNPLSEITHKRRVSALGPGGLTRERAGFEVRDVHPTHYGRVCPIETPEGPNIGLINSLALYAHLNEYGFLETPYRKVVDSKVTDQIDYLSAIEEGRYVIAQANAAVAEDGSLTDELVSSREAGETLMVTPDRIQYMDVAPSQIVSVAASLIPFLEHDDANRALMGSNMQRQAVPCLRPEKAVVGTGIERTVAVDSGTTVQAFRGGVVDYVDAGRMVIRVNDDEAAAGETGVDIYNLIKYTRSNQNTNINQRPIVKVGDIVSRGDVLADGASTDLGELALGQNMLVAFMPWNGYNFEDSILISEKVVADDRYTSIHIEELNVVARDTKLGPEEITRDISNLAEVQLGRLDESGIVYIGAEVEAGDVLVGKVTPKGETQLTPEEKLLRAIFGEKASDVKDTSLRVPSGMSGTVIDVQVFTREGIQRDKRAQQIIDDELKRYRLDLNDQLRIVEGDAFQRLARMLDGKVANGGPKKLAKGTKIEQAYLQDLDHYHWFDIRLADEEAAAQLEAIKDSIEQKRHQFDLAFEEKRKKLTQGDELPPGVLKMVKVYLAVKRRLQPGDKMAGRHGNKGVVSKIVPIEDMPYMADGRPADVVLNPLGVPSRMNVGQVLEVHLGWAAKGLGWRIGEMLQRQAKIAELREFLTKIYNESGRAEELDSFTDDEIVELAKNLREGVPFATPVFDGATEEEMSRALDLAFPDDIAKNLGMTPSKNQVRLYDGRTGEMFERTVTVGYMHYLKLHHLVDDKMHARSTGPYSLVTQQPLGGKAQFGGQRFGEMEVWALEAYGASYVLQEMLTVKSDDVTGRTKVYENLVKGDHVIDAGMPESFNVLVKEIRSLGIDIDLDRN</sequence>
<reference key="1">
    <citation type="journal article" date="2011" name="J. Bacteriol.">
        <title>Complete genome sequence of the plant growth-promoting endophyte Burkholderia phytofirmans strain PsJN.</title>
        <authorList>
            <person name="Weilharter A."/>
            <person name="Mitter B."/>
            <person name="Shin M.V."/>
            <person name="Chain P.S."/>
            <person name="Nowak J."/>
            <person name="Sessitsch A."/>
        </authorList>
    </citation>
    <scope>NUCLEOTIDE SEQUENCE [LARGE SCALE GENOMIC DNA]</scope>
    <source>
        <strain>DSM 17436 / LMG 22146 / PsJN</strain>
    </source>
</reference>
<gene>
    <name evidence="1" type="primary">rpoB</name>
    <name type="ordered locus">Bphyt_3652</name>
</gene>